<reference key="1">
    <citation type="journal article" date="2003" name="Proc. Natl. Acad. Sci. U.S.A.">
        <title>The complete genome sequence of Mycobacterium bovis.</title>
        <authorList>
            <person name="Garnier T."/>
            <person name="Eiglmeier K."/>
            <person name="Camus J.-C."/>
            <person name="Medina N."/>
            <person name="Mansoor H."/>
            <person name="Pryor M."/>
            <person name="Duthoy S."/>
            <person name="Grondin S."/>
            <person name="Lacroix C."/>
            <person name="Monsempe C."/>
            <person name="Simon S."/>
            <person name="Harris B."/>
            <person name="Atkin R."/>
            <person name="Doggett J."/>
            <person name="Mayes R."/>
            <person name="Keating L."/>
            <person name="Wheeler P.R."/>
            <person name="Parkhill J."/>
            <person name="Barrell B.G."/>
            <person name="Cole S.T."/>
            <person name="Gordon S.V."/>
            <person name="Hewinson R.G."/>
        </authorList>
    </citation>
    <scope>NUCLEOTIDE SEQUENCE [LARGE SCALE GENOMIC DNA]</scope>
    <source>
        <strain>ATCC BAA-935 / AF2122/97</strain>
    </source>
</reference>
<reference key="2">
    <citation type="journal article" date="2017" name="Genome Announc.">
        <title>Updated reference genome sequence and annotation of Mycobacterium bovis AF2122/97.</title>
        <authorList>
            <person name="Malone K.M."/>
            <person name="Farrell D."/>
            <person name="Stuber T.P."/>
            <person name="Schubert O.T."/>
            <person name="Aebersold R."/>
            <person name="Robbe-Austerman S."/>
            <person name="Gordon S.V."/>
        </authorList>
    </citation>
    <scope>NUCLEOTIDE SEQUENCE [LARGE SCALE GENOMIC DNA]</scope>
    <scope>GENOME REANNOTATION</scope>
    <source>
        <strain>ATCC BAA-935 / AF2122/97</strain>
    </source>
</reference>
<protein>
    <recommendedName>
        <fullName evidence="1">Demethylmenaquinone methyltransferase</fullName>
        <ecNumber evidence="1">2.1.1.163</ecNumber>
    </recommendedName>
</protein>
<evidence type="ECO:0000255" key="1">
    <source>
        <dbReference type="HAMAP-Rule" id="MF_01813"/>
    </source>
</evidence>
<proteinExistence type="inferred from homology"/>
<comment type="function">
    <text evidence="1">Methyltransferase required for the conversion of demethylmenaquinol (DMKH2) to menaquinol (MKH2).</text>
</comment>
<comment type="catalytic activity">
    <reaction evidence="1">
        <text>a 2-demethylmenaquinol + S-adenosyl-L-methionine = a menaquinol + S-adenosyl-L-homocysteine + H(+)</text>
        <dbReference type="Rhea" id="RHEA:42640"/>
        <dbReference type="Rhea" id="RHEA-COMP:9539"/>
        <dbReference type="Rhea" id="RHEA-COMP:9563"/>
        <dbReference type="ChEBI" id="CHEBI:15378"/>
        <dbReference type="ChEBI" id="CHEBI:18151"/>
        <dbReference type="ChEBI" id="CHEBI:55437"/>
        <dbReference type="ChEBI" id="CHEBI:57856"/>
        <dbReference type="ChEBI" id="CHEBI:59789"/>
        <dbReference type="EC" id="2.1.1.163"/>
    </reaction>
</comment>
<comment type="pathway">
    <text evidence="1">Quinol/quinone metabolism; menaquinone biosynthesis; menaquinol from 1,4-dihydroxy-2-naphthoate: step 2/2.</text>
</comment>
<comment type="similarity">
    <text evidence="1">Belongs to the class I-like SAM-binding methyltransferase superfamily. MenG/UbiE family.</text>
</comment>
<dbReference type="EC" id="2.1.1.163" evidence="1"/>
<dbReference type="EMBL" id="LT708304">
    <property type="protein sequence ID" value="SIT99169.1"/>
    <property type="molecule type" value="Genomic_DNA"/>
</dbReference>
<dbReference type="RefSeq" id="NP_854233.1">
    <property type="nucleotide sequence ID" value="NC_002945.3"/>
</dbReference>
<dbReference type="RefSeq" id="WP_003402936.1">
    <property type="nucleotide sequence ID" value="NC_002945.4"/>
</dbReference>
<dbReference type="SMR" id="P0A639"/>
<dbReference type="PATRIC" id="fig|233413.5.peg.621"/>
<dbReference type="UniPathway" id="UPA00079">
    <property type="reaction ID" value="UER00169"/>
</dbReference>
<dbReference type="Proteomes" id="UP000001419">
    <property type="component" value="Chromosome"/>
</dbReference>
<dbReference type="GO" id="GO:0043770">
    <property type="term" value="F:demethylmenaquinone methyltransferase activity"/>
    <property type="evidence" value="ECO:0007669"/>
    <property type="project" value="UniProtKB-UniRule"/>
</dbReference>
<dbReference type="GO" id="GO:0009234">
    <property type="term" value="P:menaquinone biosynthetic process"/>
    <property type="evidence" value="ECO:0007669"/>
    <property type="project" value="UniProtKB-UniRule"/>
</dbReference>
<dbReference type="GO" id="GO:0032259">
    <property type="term" value="P:methylation"/>
    <property type="evidence" value="ECO:0007669"/>
    <property type="project" value="UniProtKB-KW"/>
</dbReference>
<dbReference type="CDD" id="cd02440">
    <property type="entry name" value="AdoMet_MTases"/>
    <property type="match status" value="1"/>
</dbReference>
<dbReference type="FunFam" id="3.40.50.150:FF:000373">
    <property type="entry name" value="Demethylmenaquinone methyltransferase"/>
    <property type="match status" value="1"/>
</dbReference>
<dbReference type="Gene3D" id="3.40.50.150">
    <property type="entry name" value="Vaccinia Virus protein VP39"/>
    <property type="match status" value="1"/>
</dbReference>
<dbReference type="HAMAP" id="MF_01813">
    <property type="entry name" value="MenG_UbiE_methyltr"/>
    <property type="match status" value="1"/>
</dbReference>
<dbReference type="InterPro" id="IPR029063">
    <property type="entry name" value="SAM-dependent_MTases_sf"/>
</dbReference>
<dbReference type="InterPro" id="IPR004033">
    <property type="entry name" value="UbiE/COQ5_MeTrFase"/>
</dbReference>
<dbReference type="InterPro" id="IPR023576">
    <property type="entry name" value="UbiE/COQ5_MeTrFase_CS"/>
</dbReference>
<dbReference type="NCBIfam" id="TIGR01934">
    <property type="entry name" value="MenG_MenH_UbiE"/>
    <property type="match status" value="1"/>
</dbReference>
<dbReference type="NCBIfam" id="NF001241">
    <property type="entry name" value="PRK00216.1-2"/>
    <property type="match status" value="1"/>
</dbReference>
<dbReference type="PANTHER" id="PTHR43591:SF24">
    <property type="entry name" value="2-METHOXY-6-POLYPRENYL-1,4-BENZOQUINOL METHYLASE, MITOCHONDRIAL"/>
    <property type="match status" value="1"/>
</dbReference>
<dbReference type="PANTHER" id="PTHR43591">
    <property type="entry name" value="METHYLTRANSFERASE"/>
    <property type="match status" value="1"/>
</dbReference>
<dbReference type="Pfam" id="PF01209">
    <property type="entry name" value="Ubie_methyltran"/>
    <property type="match status" value="1"/>
</dbReference>
<dbReference type="SUPFAM" id="SSF53335">
    <property type="entry name" value="S-adenosyl-L-methionine-dependent methyltransferases"/>
    <property type="match status" value="1"/>
</dbReference>
<dbReference type="PROSITE" id="PS51608">
    <property type="entry name" value="SAM_MT_UBIE"/>
    <property type="match status" value="1"/>
</dbReference>
<dbReference type="PROSITE" id="PS01183">
    <property type="entry name" value="UBIE_1"/>
    <property type="match status" value="1"/>
</dbReference>
<dbReference type="PROSITE" id="PS01184">
    <property type="entry name" value="UBIE_2"/>
    <property type="match status" value="1"/>
</dbReference>
<gene>
    <name evidence="1" type="primary">menG</name>
    <name type="synonym">menH</name>
    <name type="ordered locus">BQ2027_MB0573</name>
</gene>
<organism>
    <name type="scientific">Mycobacterium bovis (strain ATCC BAA-935 / AF2122/97)</name>
    <dbReference type="NCBI Taxonomy" id="233413"/>
    <lineage>
        <taxon>Bacteria</taxon>
        <taxon>Bacillati</taxon>
        <taxon>Actinomycetota</taxon>
        <taxon>Actinomycetes</taxon>
        <taxon>Mycobacteriales</taxon>
        <taxon>Mycobacteriaceae</taxon>
        <taxon>Mycobacterium</taxon>
        <taxon>Mycobacterium tuberculosis complex</taxon>
    </lineage>
</organism>
<keyword id="KW-0474">Menaquinone biosynthesis</keyword>
<keyword id="KW-0489">Methyltransferase</keyword>
<keyword id="KW-1185">Reference proteome</keyword>
<keyword id="KW-0949">S-adenosyl-L-methionine</keyword>
<keyword id="KW-0808">Transferase</keyword>
<name>MENG_MYCBO</name>
<accession>P0A639</accession>
<accession>A0A1R3XVQ2</accession>
<accession>O06424</accession>
<accession>X2BFD8</accession>
<sequence length="234" mass="25299">MSRAALDKDPRDVASMFDGVARKYDLTNTVLSLGQDRYWRRATRSALRIGPGQKVLDLAAGTAVSTVELTKSGAWCVAADFSVGMLAAGAARKVPKVAGDATRLPFGDDVFDAVTISFGLRNVANQQAALREMARVTRPGGRLLVCEFSTPTNALFATAYKEYLMRALPRVARAVSSNPEAYEYLAESIRAWPDQAVLAHQISRAGWSGVRWRNLTGGIVALHAGYKPGKQTPQ</sequence>
<feature type="chain" id="PRO_0000193298" description="Demethylmenaquinone methyltransferase">
    <location>
        <begin position="1"/>
        <end position="234"/>
    </location>
</feature>
<feature type="binding site" evidence="1">
    <location>
        <position position="62"/>
    </location>
    <ligand>
        <name>S-adenosyl-L-methionine</name>
        <dbReference type="ChEBI" id="CHEBI:59789"/>
    </ligand>
</feature>
<feature type="binding site" evidence="1">
    <location>
        <position position="80"/>
    </location>
    <ligand>
        <name>S-adenosyl-L-methionine</name>
        <dbReference type="ChEBI" id="CHEBI:59789"/>
    </ligand>
</feature>
<feature type="binding site" evidence="1">
    <location>
        <begin position="100"/>
        <end position="101"/>
    </location>
    <ligand>
        <name>S-adenosyl-L-methionine</name>
        <dbReference type="ChEBI" id="CHEBI:59789"/>
    </ligand>
</feature>
<feature type="binding site" evidence="1">
    <location>
        <position position="117"/>
    </location>
    <ligand>
        <name>S-adenosyl-L-methionine</name>
        <dbReference type="ChEBI" id="CHEBI:59789"/>
    </ligand>
</feature>